<organism>
    <name type="scientific">Danio rerio</name>
    <name type="common">Zebrafish</name>
    <name type="synonym">Brachydanio rerio</name>
    <dbReference type="NCBI Taxonomy" id="7955"/>
    <lineage>
        <taxon>Eukaryota</taxon>
        <taxon>Metazoa</taxon>
        <taxon>Chordata</taxon>
        <taxon>Craniata</taxon>
        <taxon>Vertebrata</taxon>
        <taxon>Euteleostomi</taxon>
        <taxon>Actinopterygii</taxon>
        <taxon>Neopterygii</taxon>
        <taxon>Teleostei</taxon>
        <taxon>Ostariophysi</taxon>
        <taxon>Cypriniformes</taxon>
        <taxon>Danionidae</taxon>
        <taxon>Danioninae</taxon>
        <taxon>Danio</taxon>
    </lineage>
</organism>
<reference key="1">
    <citation type="journal article" date="2013" name="Nature">
        <title>The zebrafish reference genome sequence and its relationship to the human genome.</title>
        <authorList>
            <person name="Howe K."/>
            <person name="Clark M.D."/>
            <person name="Torroja C.F."/>
            <person name="Torrance J."/>
            <person name="Berthelot C."/>
            <person name="Muffato M."/>
            <person name="Collins J.E."/>
            <person name="Humphray S."/>
            <person name="McLaren K."/>
            <person name="Matthews L."/>
            <person name="McLaren S."/>
            <person name="Sealy I."/>
            <person name="Caccamo M."/>
            <person name="Churcher C."/>
            <person name="Scott C."/>
            <person name="Barrett J.C."/>
            <person name="Koch R."/>
            <person name="Rauch G.J."/>
            <person name="White S."/>
            <person name="Chow W."/>
            <person name="Kilian B."/>
            <person name="Quintais L.T."/>
            <person name="Guerra-Assuncao J.A."/>
            <person name="Zhou Y."/>
            <person name="Gu Y."/>
            <person name="Yen J."/>
            <person name="Vogel J.H."/>
            <person name="Eyre T."/>
            <person name="Redmond S."/>
            <person name="Banerjee R."/>
            <person name="Chi J."/>
            <person name="Fu B."/>
            <person name="Langley E."/>
            <person name="Maguire S.F."/>
            <person name="Laird G.K."/>
            <person name="Lloyd D."/>
            <person name="Kenyon E."/>
            <person name="Donaldson S."/>
            <person name="Sehra H."/>
            <person name="Almeida-King J."/>
            <person name="Loveland J."/>
            <person name="Trevanion S."/>
            <person name="Jones M."/>
            <person name="Quail M."/>
            <person name="Willey D."/>
            <person name="Hunt A."/>
            <person name="Burton J."/>
            <person name="Sims S."/>
            <person name="McLay K."/>
            <person name="Plumb B."/>
            <person name="Davis J."/>
            <person name="Clee C."/>
            <person name="Oliver K."/>
            <person name="Clark R."/>
            <person name="Riddle C."/>
            <person name="Elliot D."/>
            <person name="Threadgold G."/>
            <person name="Harden G."/>
            <person name="Ware D."/>
            <person name="Begum S."/>
            <person name="Mortimore B."/>
            <person name="Kerry G."/>
            <person name="Heath P."/>
            <person name="Phillimore B."/>
            <person name="Tracey A."/>
            <person name="Corby N."/>
            <person name="Dunn M."/>
            <person name="Johnson C."/>
            <person name="Wood J."/>
            <person name="Clark S."/>
            <person name="Pelan S."/>
            <person name="Griffiths G."/>
            <person name="Smith M."/>
            <person name="Glithero R."/>
            <person name="Howden P."/>
            <person name="Barker N."/>
            <person name="Lloyd C."/>
            <person name="Stevens C."/>
            <person name="Harley J."/>
            <person name="Holt K."/>
            <person name="Panagiotidis G."/>
            <person name="Lovell J."/>
            <person name="Beasley H."/>
            <person name="Henderson C."/>
            <person name="Gordon D."/>
            <person name="Auger K."/>
            <person name="Wright D."/>
            <person name="Collins J."/>
            <person name="Raisen C."/>
            <person name="Dyer L."/>
            <person name="Leung K."/>
            <person name="Robertson L."/>
            <person name="Ambridge K."/>
            <person name="Leongamornlert D."/>
            <person name="McGuire S."/>
            <person name="Gilderthorp R."/>
            <person name="Griffiths C."/>
            <person name="Manthravadi D."/>
            <person name="Nichol S."/>
            <person name="Barker G."/>
            <person name="Whitehead S."/>
            <person name="Kay M."/>
            <person name="Brown J."/>
            <person name="Murnane C."/>
            <person name="Gray E."/>
            <person name="Humphries M."/>
            <person name="Sycamore N."/>
            <person name="Barker D."/>
            <person name="Saunders D."/>
            <person name="Wallis J."/>
            <person name="Babbage A."/>
            <person name="Hammond S."/>
            <person name="Mashreghi-Mohammadi M."/>
            <person name="Barr L."/>
            <person name="Martin S."/>
            <person name="Wray P."/>
            <person name="Ellington A."/>
            <person name="Matthews N."/>
            <person name="Ellwood M."/>
            <person name="Woodmansey R."/>
            <person name="Clark G."/>
            <person name="Cooper J."/>
            <person name="Tromans A."/>
            <person name="Grafham D."/>
            <person name="Skuce C."/>
            <person name="Pandian R."/>
            <person name="Andrews R."/>
            <person name="Harrison E."/>
            <person name="Kimberley A."/>
            <person name="Garnett J."/>
            <person name="Fosker N."/>
            <person name="Hall R."/>
            <person name="Garner P."/>
            <person name="Kelly D."/>
            <person name="Bird C."/>
            <person name="Palmer S."/>
            <person name="Gehring I."/>
            <person name="Berger A."/>
            <person name="Dooley C.M."/>
            <person name="Ersan-Urun Z."/>
            <person name="Eser C."/>
            <person name="Geiger H."/>
            <person name="Geisler M."/>
            <person name="Karotki L."/>
            <person name="Kirn A."/>
            <person name="Konantz J."/>
            <person name="Konantz M."/>
            <person name="Oberlander M."/>
            <person name="Rudolph-Geiger S."/>
            <person name="Teucke M."/>
            <person name="Lanz C."/>
            <person name="Raddatz G."/>
            <person name="Osoegawa K."/>
            <person name="Zhu B."/>
            <person name="Rapp A."/>
            <person name="Widaa S."/>
            <person name="Langford C."/>
            <person name="Yang F."/>
            <person name="Schuster S.C."/>
            <person name="Carter N.P."/>
            <person name="Harrow J."/>
            <person name="Ning Z."/>
            <person name="Herrero J."/>
            <person name="Searle S.M."/>
            <person name="Enright A."/>
            <person name="Geisler R."/>
            <person name="Plasterk R.H."/>
            <person name="Lee C."/>
            <person name="Westerfield M."/>
            <person name="de Jong P.J."/>
            <person name="Zon L.I."/>
            <person name="Postlethwait J.H."/>
            <person name="Nusslein-Volhard C."/>
            <person name="Hubbard T.J."/>
            <person name="Roest Crollius H."/>
            <person name="Rogers J."/>
            <person name="Stemple D.L."/>
        </authorList>
    </citation>
    <scope>NUCLEOTIDE SEQUENCE [LARGE SCALE GENOMIC DNA]</scope>
    <source>
        <strain>Tuebingen</strain>
    </source>
</reference>
<reference key="2">
    <citation type="journal article" date="2014" name="J. Neuromuscul. Dis.">
        <title>Mutations in the mitochondrial citrate carrier SLC25A1 are associated with impaired neuromuscular transmission.</title>
        <authorList>
            <person name="Chaouch A."/>
            <person name="Porcelli V."/>
            <person name="Cox D."/>
            <person name="Edvardson S."/>
            <person name="Scarcia P."/>
            <person name="De Grassi A."/>
            <person name="Pierri C.L."/>
            <person name="Cossins J."/>
            <person name="Laval S.H."/>
            <person name="Griffin H."/>
            <person name="Mueller J.S."/>
            <person name="Evangelista T."/>
            <person name="Toepf A."/>
            <person name="Abicht A."/>
            <person name="Huebner A."/>
            <person name="von der Hagen M."/>
            <person name="Bushby K."/>
            <person name="Straub V."/>
            <person name="Horvath R."/>
            <person name="Elpeleg O."/>
            <person name="Palace J."/>
            <person name="Senderek J."/>
            <person name="Beeson D."/>
            <person name="Palmieri L."/>
            <person name="Lochmueller H."/>
        </authorList>
    </citation>
    <scope>FUNCTION</scope>
    <scope>DISRUPTION PHENOTYPE</scope>
</reference>
<proteinExistence type="inferred from homology"/>
<keyword id="KW-0050">Antiport</keyword>
<keyword id="KW-0472">Membrane</keyword>
<keyword id="KW-0496">Mitochondrion</keyword>
<keyword id="KW-0999">Mitochondrion inner membrane</keyword>
<keyword id="KW-1185">Reference proteome</keyword>
<keyword id="KW-0677">Repeat</keyword>
<keyword id="KW-0809">Transit peptide</keyword>
<keyword id="KW-0812">Transmembrane</keyword>
<keyword id="KW-1133">Transmembrane helix</keyword>
<keyword id="KW-0813">Transport</keyword>
<dbReference type="EMBL" id="CR450714">
    <property type="status" value="NOT_ANNOTATED_CDS"/>
    <property type="molecule type" value="Genomic_DNA"/>
</dbReference>
<dbReference type="RefSeq" id="NP_001313457.1">
    <property type="nucleotide sequence ID" value="NM_001326528.1"/>
</dbReference>
<dbReference type="SMR" id="F1R4U0"/>
<dbReference type="FunCoup" id="F1R4U0">
    <property type="interactions" value="2388"/>
</dbReference>
<dbReference type="STRING" id="7955.ENSDARP00000104198"/>
<dbReference type="PaxDb" id="7955-ENSDARP00000104198"/>
<dbReference type="Ensembl" id="ENSDART00000109131">
    <property type="protein sequence ID" value="ENSDARP00000104198"/>
    <property type="gene ID" value="ENSDARG00000076381"/>
</dbReference>
<dbReference type="GeneID" id="795332"/>
<dbReference type="KEGG" id="dre:795332"/>
<dbReference type="AGR" id="ZFIN:ZDB-GENE-130114-1"/>
<dbReference type="CTD" id="795332"/>
<dbReference type="ZFIN" id="ZDB-GENE-130114-1">
    <property type="gene designation" value="slc25a1b"/>
</dbReference>
<dbReference type="eggNOG" id="KOG0756">
    <property type="taxonomic scope" value="Eukaryota"/>
</dbReference>
<dbReference type="HOGENOM" id="CLU_015166_5_1_1"/>
<dbReference type="InParanoid" id="F1R4U0"/>
<dbReference type="OMA" id="AWYAGCT"/>
<dbReference type="OrthoDB" id="44467at2759"/>
<dbReference type="TreeFam" id="TF105786"/>
<dbReference type="Reactome" id="R-DRE-428643">
    <property type="pathway name" value="Organic anion transporters"/>
</dbReference>
<dbReference type="PRO" id="PR:F1R4U0"/>
<dbReference type="Proteomes" id="UP000000437">
    <property type="component" value="Chromosome 10"/>
</dbReference>
<dbReference type="Bgee" id="ENSDARG00000076381">
    <property type="expression patterns" value="Expressed in liver and 18 other cell types or tissues"/>
</dbReference>
<dbReference type="GO" id="GO:0005743">
    <property type="term" value="C:mitochondrial inner membrane"/>
    <property type="evidence" value="ECO:0000250"/>
    <property type="project" value="UniProtKB"/>
</dbReference>
<dbReference type="GO" id="GO:0005739">
    <property type="term" value="C:mitochondrion"/>
    <property type="evidence" value="ECO:0000318"/>
    <property type="project" value="GO_Central"/>
</dbReference>
<dbReference type="GO" id="GO:0015297">
    <property type="term" value="F:antiporter activity"/>
    <property type="evidence" value="ECO:0007669"/>
    <property type="project" value="UniProtKB-KW"/>
</dbReference>
<dbReference type="GO" id="GO:0071913">
    <property type="term" value="F:citrate secondary active transmembrane transporter activity"/>
    <property type="evidence" value="ECO:0000250"/>
    <property type="project" value="UniProtKB"/>
</dbReference>
<dbReference type="GO" id="GO:0015142">
    <property type="term" value="F:tricarboxylic acid transmembrane transporter activity"/>
    <property type="evidence" value="ECO:0000250"/>
    <property type="project" value="UniProtKB"/>
</dbReference>
<dbReference type="GO" id="GO:0006843">
    <property type="term" value="P:mitochondrial citrate transmembrane transport"/>
    <property type="evidence" value="ECO:0000250"/>
    <property type="project" value="UniProtKB"/>
</dbReference>
<dbReference type="GO" id="GO:0007528">
    <property type="term" value="P:neuromuscular junction development"/>
    <property type="evidence" value="ECO:0000316"/>
    <property type="project" value="ZFIN"/>
</dbReference>
<dbReference type="FunFam" id="1.50.40.10:FF:000007">
    <property type="entry name" value="Mitochondrial tricarboxylate transport protein-like"/>
    <property type="match status" value="1"/>
</dbReference>
<dbReference type="Gene3D" id="1.50.40.10">
    <property type="entry name" value="Mitochondrial carrier domain"/>
    <property type="match status" value="1"/>
</dbReference>
<dbReference type="InterPro" id="IPR002067">
    <property type="entry name" value="Mit_carrier"/>
</dbReference>
<dbReference type="InterPro" id="IPR018108">
    <property type="entry name" value="Mitochondrial_sb/sol_carrier"/>
</dbReference>
<dbReference type="InterPro" id="IPR023395">
    <property type="entry name" value="Mt_carrier_dom_sf"/>
</dbReference>
<dbReference type="InterPro" id="IPR049563">
    <property type="entry name" value="TXTP-like"/>
</dbReference>
<dbReference type="PANTHER" id="PTHR45788:SF6">
    <property type="entry name" value="SI:DKEY-178E17.1-RELATED"/>
    <property type="match status" value="1"/>
</dbReference>
<dbReference type="PANTHER" id="PTHR45788">
    <property type="entry name" value="SUCCINATE/FUMARATE MITOCHONDRIAL TRANSPORTER-RELATED"/>
    <property type="match status" value="1"/>
</dbReference>
<dbReference type="Pfam" id="PF00153">
    <property type="entry name" value="Mito_carr"/>
    <property type="match status" value="3"/>
</dbReference>
<dbReference type="PRINTS" id="PR00926">
    <property type="entry name" value="MITOCARRIER"/>
</dbReference>
<dbReference type="SUPFAM" id="SSF103506">
    <property type="entry name" value="Mitochondrial carrier"/>
    <property type="match status" value="1"/>
</dbReference>
<dbReference type="PROSITE" id="PS50920">
    <property type="entry name" value="SOLCAR"/>
    <property type="match status" value="3"/>
</dbReference>
<gene>
    <name evidence="8" type="primary">slc25a1b</name>
</gene>
<feature type="propeptide" id="PRO_0000456579" description="Removed in mature form" evidence="1">
    <location>
        <begin position="1"/>
        <end position="20"/>
    </location>
</feature>
<feature type="chain" id="PRO_0000447227" description="Tricarboxylate transport protein B, mitochondrial">
    <location>
        <begin position="21"/>
        <end position="317"/>
    </location>
</feature>
<feature type="transmembrane region" description="Helical" evidence="4">
    <location>
        <begin position="35"/>
        <end position="55"/>
    </location>
</feature>
<feature type="transmembrane region" description="Helical" evidence="4">
    <location>
        <begin position="130"/>
        <end position="150"/>
    </location>
</feature>
<feature type="transmembrane region" description="Helical" evidence="4">
    <location>
        <begin position="223"/>
        <end position="243"/>
    </location>
</feature>
<feature type="transmembrane region" description="Helical" evidence="4">
    <location>
        <begin position="294"/>
        <end position="314"/>
    </location>
</feature>
<feature type="repeat" description="Solcar" evidence="5">
    <location>
        <begin position="29"/>
        <end position="117"/>
    </location>
</feature>
<feature type="repeat" description="Solcar" evidence="5">
    <location>
        <begin position="128"/>
        <end position="214"/>
    </location>
</feature>
<feature type="repeat" description="Solcar" evidence="5">
    <location>
        <begin position="224"/>
        <end position="309"/>
    </location>
</feature>
<accession>F1R4U0</accession>
<evidence type="ECO:0000250" key="1">
    <source>
        <dbReference type="UniProtKB" id="P32089"/>
    </source>
</evidence>
<evidence type="ECO:0000250" key="2">
    <source>
        <dbReference type="UniProtKB" id="P53007"/>
    </source>
</evidence>
<evidence type="ECO:0000250" key="3">
    <source>
        <dbReference type="UniProtKB" id="Q8JZU2"/>
    </source>
</evidence>
<evidence type="ECO:0000255" key="4"/>
<evidence type="ECO:0000255" key="5">
    <source>
        <dbReference type="PROSITE-ProRule" id="PRU00282"/>
    </source>
</evidence>
<evidence type="ECO:0000255" key="6">
    <source>
        <dbReference type="RuleBase" id="RU000488"/>
    </source>
</evidence>
<evidence type="ECO:0000269" key="7">
    <source>
    </source>
</evidence>
<evidence type="ECO:0000312" key="8">
    <source>
        <dbReference type="ZFIN" id="ZDB-GENE-130114-1"/>
    </source>
</evidence>
<name>TXTPB_DANRE</name>
<sequence length="317" mass="34345">MSGSPKFVSPFHRPHCLSAAAPAGQAKLTHPGKAILAGGIAGGIEICITFPTEYVKTQLQLDEKANPPRYKGIVDCVKQTVQGHGVKGLYRGLSSLLYGSIPKAAVRFGVFEFLSNQMRDESGKLDSTRGLICGLGAGVAEAVVVVCPMETVKVKFIHDQTSANPKYRGFFHGVREIVRTQGLKGTYQGLTATVLKQGSNQAIRFYVMTALRNWYKGDNPNKSINPVVTGLFGAVAGAASVFGNTPLDVIKTRMQGLEAHKYKSTVDCAIKIMKYEGPAAFYKGTVPRLGRVCMDVAIVFIIYEEVVKVLNKVWKTD</sequence>
<protein>
    <recommendedName>
        <fullName evidence="2">Tricarboxylate transport protein B, mitochondrial</fullName>
    </recommendedName>
    <alternativeName>
        <fullName evidence="2">Citrate transport protein B</fullName>
    </alternativeName>
    <alternativeName>
        <fullName>Solute carrier family 25 member 1b</fullName>
    </alternativeName>
</protein>
<comment type="function">
    <text evidence="2 7">Mitochondrial electroneutral antiporter that exports citrate from the mitochondria into the cytosol in exchange for malate. Also able to mediate the exchange of citrate for isocitrate, phosphoenolpyruvate, cis-aconitate and to a lesser extent trans-aconitate, maleate and succinate (By similarity). In the cytoplasm, citrate plays important roles in fatty acid and sterol synthesis, regulation of glycolysis, protein acetylation, and other physiopathological processes (PubMed:26870663).</text>
</comment>
<comment type="catalytic activity">
    <reaction evidence="2">
        <text>(S)-malate(in) + citrate(out) = (S)-malate(out) + citrate(in)</text>
        <dbReference type="Rhea" id="RHEA:72483"/>
        <dbReference type="ChEBI" id="CHEBI:15589"/>
        <dbReference type="ChEBI" id="CHEBI:16947"/>
    </reaction>
</comment>
<comment type="catalytic activity">
    <reaction evidence="2">
        <text>D-threo-isocitrate(in) + citrate(out) = D-threo-isocitrate(out) + citrate(in)</text>
        <dbReference type="Rhea" id="RHEA:72471"/>
        <dbReference type="ChEBI" id="CHEBI:15562"/>
        <dbReference type="ChEBI" id="CHEBI:16947"/>
    </reaction>
</comment>
<comment type="catalytic activity">
    <reaction evidence="2">
        <text>citrate(out) + succinate(in) = citrate(in) + succinate(out)</text>
        <dbReference type="Rhea" id="RHEA:28835"/>
        <dbReference type="ChEBI" id="CHEBI:16947"/>
        <dbReference type="ChEBI" id="CHEBI:30031"/>
    </reaction>
</comment>
<comment type="catalytic activity">
    <reaction evidence="2">
        <text>cis-aconitate(in) + citrate(out) = cis-aconitate(out) + citrate(in)</text>
        <dbReference type="Rhea" id="RHEA:72475"/>
        <dbReference type="ChEBI" id="CHEBI:16383"/>
        <dbReference type="ChEBI" id="CHEBI:16947"/>
    </reaction>
</comment>
<comment type="catalytic activity">
    <reaction evidence="2">
        <text>trans-aconitate(in) + citrate(out) = trans-aconitate(out) + citrate(in)</text>
        <dbReference type="Rhea" id="RHEA:72479"/>
        <dbReference type="ChEBI" id="CHEBI:15708"/>
        <dbReference type="ChEBI" id="CHEBI:16947"/>
    </reaction>
</comment>
<comment type="catalytic activity">
    <reaction evidence="2">
        <text>phosphoenolpyruvate(in) + citrate(out) = phosphoenolpyruvate(out) + citrate(in)</text>
        <dbReference type="Rhea" id="RHEA:72487"/>
        <dbReference type="ChEBI" id="CHEBI:16947"/>
        <dbReference type="ChEBI" id="CHEBI:58702"/>
    </reaction>
</comment>
<comment type="catalytic activity">
    <reaction evidence="2">
        <text>maleate(in) + citrate(out) = maleate(out) + citrate(in)</text>
        <dbReference type="Rhea" id="RHEA:72491"/>
        <dbReference type="ChEBI" id="CHEBI:16947"/>
        <dbReference type="ChEBI" id="CHEBI:30780"/>
    </reaction>
</comment>
<comment type="subcellular location">
    <subcellularLocation>
        <location evidence="3">Mitochondrion inner membrane</location>
        <topology evidence="4">Multi-pass membrane protein</topology>
    </subcellularLocation>
</comment>
<comment type="PTM">
    <text evidence="1">Possesses a short cleavable presequence, which, however, is found to be dispensable both for targeting to mitochondria and insertion into the inner membrane. However, the presequence is required to keep SLC25A1 in a soluble state and thus in an import-competent state. Mature SLC25A1 lacking the presequence is prone to aggregation.</text>
</comment>
<comment type="disruption phenotype">
    <text evidence="7">Morpholino-injected embryos display altered tail morphology, impaired swimming and defective touch-evoked escape responses. Neuromuscular junction development is abnormal and motor axon terminals show short and erratic outgrowth toward the muscle fiber with no evidence of complete synapse formation. In addition, knockdown embryos often show edema of the hindbrain, heart, yolk sac and tail.</text>
</comment>
<comment type="similarity">
    <text evidence="4 6">Belongs to the mitochondrial carrier (TC 2.A.29) family.</text>
</comment>